<evidence type="ECO:0000250" key="1"/>
<evidence type="ECO:0000250" key="2">
    <source>
        <dbReference type="UniProtKB" id="P10238"/>
    </source>
</evidence>
<evidence type="ECO:0000256" key="3">
    <source>
        <dbReference type="SAM" id="MobiDB-lite"/>
    </source>
</evidence>
<evidence type="ECO:0000305" key="4"/>
<feature type="chain" id="PRO_0000385464" description="mRNA export factor ICP27 homolog">
    <location>
        <begin position="1"/>
        <end position="452"/>
    </location>
</feature>
<feature type="zinc finger region" description="CHC2-type" evidence="2">
    <location>
        <begin position="335"/>
        <end position="426"/>
    </location>
</feature>
<feature type="region of interest" description="Disordered" evidence="3">
    <location>
        <begin position="42"/>
        <end position="164"/>
    </location>
</feature>
<feature type="compositionally biased region" description="Basic and acidic residues" evidence="3">
    <location>
        <begin position="98"/>
        <end position="107"/>
    </location>
</feature>
<feature type="compositionally biased region" description="Basic residues" evidence="3">
    <location>
        <begin position="129"/>
        <end position="144"/>
    </location>
</feature>
<feature type="compositionally biased region" description="Basic and acidic residues" evidence="3">
    <location>
        <begin position="154"/>
        <end position="164"/>
    </location>
</feature>
<feature type="binding site" evidence="2">
    <location>
        <position position="335"/>
    </location>
    <ligand>
        <name>Zn(2+)</name>
        <dbReference type="ChEBI" id="CHEBI:29105"/>
    </ligand>
</feature>
<feature type="binding site" evidence="2">
    <location>
        <position position="417"/>
    </location>
    <ligand>
        <name>Zn(2+)</name>
        <dbReference type="ChEBI" id="CHEBI:29105"/>
    </ligand>
</feature>
<feature type="binding site" evidence="2">
    <location>
        <position position="421"/>
    </location>
    <ligand>
        <name>Zn(2+)</name>
        <dbReference type="ChEBI" id="CHEBI:29105"/>
    </ligand>
</feature>
<feature type="binding site" evidence="2">
    <location>
        <position position="426"/>
    </location>
    <ligand>
        <name>Zn(2+)</name>
        <dbReference type="ChEBI" id="CHEBI:29105"/>
    </ligand>
</feature>
<proteinExistence type="inferred from homology"/>
<comment type="function">
    <text evidence="1">Multifunctional regulator of the expression of viral genes that mediates nuclear export of viral intronless mRNAs. This immediate early (EI) protein promotes the nuclear export of viral intronless mRNAs by interacting with mRNAs and host NXF1/TAP (By similarity).</text>
</comment>
<comment type="subunit">
    <text evidence="1">Homodimer. Homodimerization is required for transactivation. Associates in a complex with RNA, and host export factors NXF1/TAP and ALYREF; these interactions allow nuclear export of viral transcripts. Interacts with three host shuttling SR proteins SRSF1, SRSF3 and SRSF7. Interacts with host SRPK1. Interacts with IE62; this interaction enhances IE62 transactivation (By similarity).</text>
</comment>
<comment type="subcellular location">
    <subcellularLocation>
        <location evidence="1">Host cytoplasm</location>
    </subcellularLocation>
    <subcellularLocation>
        <location evidence="1">Host nucleus</location>
    </subcellularLocation>
    <text evidence="1">Shuttles between the nucleus and the cytoplasm. IE4 utilizes, at least, XPO1/CRM1 as a cofactor for nuclear export (By similarity).</text>
</comment>
<comment type="domain">
    <text evidence="1">Binds viral intronless RNAs and SR proteins through the Arg-rich region.</text>
</comment>
<comment type="PTM">
    <text>Phosphorylated in vitro by SRPK1.</text>
</comment>
<comment type="similarity">
    <text evidence="4">Belongs to the HHV-1 ICP27 protein family.</text>
</comment>
<name>ICP27_VZVO</name>
<protein>
    <recommendedName>
        <fullName>mRNA export factor ICP27 homolog</fullName>
    </recommendedName>
    <alternativeName>
        <fullName>Immediate-early protein 4</fullName>
        <shortName>IE4</shortName>
    </alternativeName>
</protein>
<gene>
    <name type="ORF">ORF4</name>
</gene>
<sequence>MASASIPTDPDVSTICEDFMNLLPDEPSDDFALEVTDWANDEAIGSTPGEDSTTSRTVYVERTADTAYNPRYSKRRHGRRESYHHNRPKTLVVVLPDSNHHGGRDVETGYARIERGHRRSSRSYNTQSSRKHRDRSLSNRRRRPTTPPAMTTGERNDQTHDESYRLRFSKRDARRERIRKEYDIPVDRITGRAIEVVSTAGASVTIDSVRHLDETIEKLVVRYATIQEGDSWASGGCFPGIKQNTSWPELMLYGHELYRTFESYKMDSRIARALRERVIRGESLIEALESADELLTWIKMLAAKNLPIYTNNPIVATSKSLLENLKLKLGPFVRCLLLNRDNDLGSRTLPELLRQQRFSDITCITTYMFVMIARIANIVVRGSKFVEYDDISCNVQVLQEYTPGSCLAGVLEALITHQRECGRVECTLSTWAGHLSDARPYGKYFKCSTFNC</sequence>
<dbReference type="EMBL" id="AB097932">
    <property type="status" value="NOT_ANNOTATED_CDS"/>
    <property type="molecule type" value="Genomic_DNA"/>
</dbReference>
<dbReference type="EMBL" id="AB097933">
    <property type="status" value="NOT_ANNOTATED_CDS"/>
    <property type="molecule type" value="Genomic_DNA"/>
</dbReference>
<dbReference type="EMBL" id="DQ008354">
    <property type="protein sequence ID" value="AAY57623.1"/>
    <property type="molecule type" value="Genomic_DNA"/>
</dbReference>
<dbReference type="EMBL" id="DQ008355">
    <property type="protein sequence ID" value="AAY57694.1"/>
    <property type="molecule type" value="Genomic_DNA"/>
</dbReference>
<dbReference type="RefSeq" id="NP_040127.1">
    <property type="nucleotide sequence ID" value="NC_001348.1"/>
</dbReference>
<dbReference type="SMR" id="Q4JQX1"/>
<dbReference type="IntAct" id="Q4JQX1">
    <property type="interactions" value="7"/>
</dbReference>
<dbReference type="GeneID" id="1487672"/>
<dbReference type="KEGG" id="vg:1487672"/>
<dbReference type="Proteomes" id="UP000002603">
    <property type="component" value="Genome"/>
</dbReference>
<dbReference type="Proteomes" id="UP000008504">
    <property type="component" value="Genome"/>
</dbReference>
<dbReference type="Proteomes" id="UP000008505">
    <property type="component" value="Genome"/>
</dbReference>
<dbReference type="Proteomes" id="UP000008506">
    <property type="component" value="Genome"/>
</dbReference>
<dbReference type="GO" id="GO:0030430">
    <property type="term" value="C:host cell cytoplasm"/>
    <property type="evidence" value="ECO:0007669"/>
    <property type="project" value="UniProtKB-SubCell"/>
</dbReference>
<dbReference type="GO" id="GO:0042025">
    <property type="term" value="C:host cell nucleus"/>
    <property type="evidence" value="ECO:0007669"/>
    <property type="project" value="UniProtKB-SubCell"/>
</dbReference>
<dbReference type="GO" id="GO:0003723">
    <property type="term" value="F:RNA binding"/>
    <property type="evidence" value="ECO:0007669"/>
    <property type="project" value="UniProtKB-KW"/>
</dbReference>
<dbReference type="GO" id="GO:0008270">
    <property type="term" value="F:zinc ion binding"/>
    <property type="evidence" value="ECO:0007669"/>
    <property type="project" value="UniProtKB-KW"/>
</dbReference>
<dbReference type="GO" id="GO:0006355">
    <property type="term" value="P:regulation of DNA-templated transcription"/>
    <property type="evidence" value="ECO:0007669"/>
    <property type="project" value="InterPro"/>
</dbReference>
<dbReference type="InterPro" id="IPR008648">
    <property type="entry name" value="ICP27-like"/>
</dbReference>
<dbReference type="Pfam" id="PF05459">
    <property type="entry name" value="Herpes_UL69"/>
    <property type="match status" value="1"/>
</dbReference>
<organism>
    <name type="scientific">Varicella-zoster virus (strain Oka vaccine)</name>
    <name type="common">HHV-3</name>
    <name type="synonym">Human herpesvirus 3</name>
    <dbReference type="NCBI Taxonomy" id="341980"/>
    <lineage>
        <taxon>Viruses</taxon>
        <taxon>Duplodnaviria</taxon>
        <taxon>Heunggongvirae</taxon>
        <taxon>Peploviricota</taxon>
        <taxon>Herviviricetes</taxon>
        <taxon>Herpesvirales</taxon>
        <taxon>Orthoherpesviridae</taxon>
        <taxon>Alphaherpesvirinae</taxon>
        <taxon>Varicellovirus</taxon>
        <taxon>Varicellovirus humanalpha3</taxon>
        <taxon>Human herpesvirus 3</taxon>
    </lineage>
</organism>
<accession>Q4JQX1</accession>
<reference key="1">
    <citation type="journal article" date="2002" name="J. Virol.">
        <title>Comparison of the complete DNA sequences of the Oka varicella vaccine and its parental virus.</title>
        <authorList>
            <person name="Gomi Y."/>
            <person name="Sunamachi H."/>
            <person name="Mori Y."/>
            <person name="Nagaike K."/>
            <person name="Takahashi M."/>
            <person name="Yamanishi K."/>
        </authorList>
    </citation>
    <scope>NUCLEOTIDE SEQUENCE [LARGE SCALE GENOMIC DNA]</scope>
    <source>
        <strain>Isolate Human/Japan/P-Oka/1970</strain>
        <strain>Oka varicella vaccine Biken (V-Oka-Biken)</strain>
    </source>
</reference>
<reference key="2">
    <citation type="journal article" date="2008" name="J. Virol.">
        <title>Complete DNA sequences of two oka strain varicella-zoster virus genomes.</title>
        <authorList>
            <person name="Tillieux S.L."/>
            <person name="Halsey W.S."/>
            <person name="Thomas E.S."/>
            <person name="Voycik J.J."/>
            <person name="Sathe G.M."/>
            <person name="Vassilev V."/>
        </authorList>
    </citation>
    <scope>NUCLEOTIDE SEQUENCE [LARGE SCALE GENOMIC DNA]</scope>
    <source>
        <strain>Oka varicella vaccine VarilRix (V-Oka-GSK)</strain>
        <strain>Oka varicella vaccine Varivax (V-Oka-Merck)</strain>
    </source>
</reference>
<keyword id="KW-0010">Activator</keyword>
<keyword id="KW-0244">Early protein</keyword>
<keyword id="KW-1035">Host cytoplasm</keyword>
<keyword id="KW-1048">Host nucleus</keyword>
<keyword id="KW-0945">Host-virus interaction</keyword>
<keyword id="KW-0479">Metal-binding</keyword>
<keyword id="KW-0694">RNA-binding</keyword>
<keyword id="KW-0804">Transcription</keyword>
<keyword id="KW-0805">Transcription regulation</keyword>
<keyword id="KW-0862">Zinc</keyword>
<keyword id="KW-0863">Zinc-finger</keyword>
<organismHost>
    <name type="scientific">Homo sapiens</name>
    <name type="common">Human</name>
    <dbReference type="NCBI Taxonomy" id="9606"/>
</organismHost>